<organism>
    <name type="scientific">Orgyia pseudotsugata multicapsid polyhedrosis virus</name>
    <name type="common">OpMNPV</name>
    <dbReference type="NCBI Taxonomy" id="262177"/>
    <lineage>
        <taxon>Viruses</taxon>
        <taxon>Viruses incertae sedis</taxon>
        <taxon>Naldaviricetes</taxon>
        <taxon>Lefavirales</taxon>
        <taxon>Baculoviridae</taxon>
        <taxon>Alphabaculovirus</taxon>
        <taxon>Alphabaculovirus orpseudotsugatae</taxon>
    </lineage>
</organism>
<proteinExistence type="predicted"/>
<reference key="1">
    <citation type="journal article" date="1997" name="Virology">
        <title>The sequence of the Orgyia pseudotsugata multinucleocapsid nuclear polyhedrosis virus genome.</title>
        <authorList>
            <person name="Ahrens C.H."/>
            <person name="Russell R.R."/>
            <person name="Funk C.J."/>
            <person name="Evans J."/>
            <person name="Harwood S."/>
            <person name="Rohrmann G.F."/>
        </authorList>
    </citation>
    <scope>NUCLEOTIDE SEQUENCE [LARGE SCALE GENOMIC DNA]</scope>
</reference>
<name>Y072_NPVOP</name>
<keyword id="KW-1185">Reference proteome</keyword>
<accession>O10325</accession>
<gene>
    <name type="ORF">ORF75</name>
</gene>
<dbReference type="EMBL" id="U75930">
    <property type="protein sequence ID" value="AAC59074.1"/>
    <property type="molecule type" value="Genomic_DNA"/>
</dbReference>
<dbReference type="RefSeq" id="NP_046231.1">
    <property type="nucleotide sequence ID" value="NC_001875.2"/>
</dbReference>
<dbReference type="SMR" id="O10325"/>
<dbReference type="KEGG" id="vg:912034"/>
<dbReference type="OrthoDB" id="21701at10239"/>
<dbReference type="Proteomes" id="UP000009248">
    <property type="component" value="Genome"/>
</dbReference>
<dbReference type="InterPro" id="IPR022621">
    <property type="entry name" value="AcMNPV_Orf72"/>
</dbReference>
<dbReference type="Pfam" id="PF10870">
    <property type="entry name" value="DUF2729"/>
    <property type="match status" value="1"/>
</dbReference>
<feature type="chain" id="PRO_0000133011" description="Uncharacterized 6.3 kDa protein">
    <location>
        <begin position="1"/>
        <end position="55"/>
    </location>
</feature>
<protein>
    <recommendedName>
        <fullName>Uncharacterized 6.3 kDa protein</fullName>
    </recommendedName>
</protein>
<organismHost>
    <name type="scientific">Orgyia pseudotsugata</name>
    <name type="common">Douglas-fir tussock moth</name>
    <dbReference type="NCBI Taxonomy" id="33414"/>
</organismHost>
<sequence length="55" mass="6250">MPGNLLAYYKLKLAKSVSKTVSALLCKCVAPEDNDGDRYLQFNNNCNFIYIYVVK</sequence>